<evidence type="ECO:0000255" key="1">
    <source>
        <dbReference type="HAMAP-Rule" id="MF_00306"/>
    </source>
</evidence>
<evidence type="ECO:0000305" key="2"/>
<sequence>MFNNLTQRLSDSLKKILNKGRLTEENIKETIREVRKALLEADVALSVIKKFIENVKKKSIGHEINKSLTPGQEFIKIVKHELIFAMGEKNHSLNFSIEPPAVILVVGLQGSGKTTSLAKLGKWIKNKYKKKILITSTDTYRAAAIEQLKILSDQIEIDFFESDKHHTPIEITKNAIKYAKLKLYDVLLIDTAGRLHIDKKMMNEIQQIQVISKAIETLLIVDSMMGQDAINMAKIFNNDLLISGIILTKTDGDSRSGIALSMRYITGKPIKFIGTGEKIISLEPFHPERIADRILGMNDIMSLIEDIEEKVDQSQIQKLTKKLKKGHDFNLNDFLTQIKQMKKIGGLNYFANKFSINHQLSNNISLLNTDKNTLKKIEAMICSMTPKERIKPIIIKGSRKRRIALGSGTQIQDVNKLLKNFDDIRRIMKKIKTDGIAKVIRGIKNMLPKKF</sequence>
<proteinExistence type="inferred from homology"/>
<name>SRP54_BUCAI</name>
<keyword id="KW-0963">Cytoplasm</keyword>
<keyword id="KW-0342">GTP-binding</keyword>
<keyword id="KW-0378">Hydrolase</keyword>
<keyword id="KW-0547">Nucleotide-binding</keyword>
<keyword id="KW-1185">Reference proteome</keyword>
<keyword id="KW-0687">Ribonucleoprotein</keyword>
<keyword id="KW-0694">RNA-binding</keyword>
<keyword id="KW-0733">Signal recognition particle</keyword>
<reference key="1">
    <citation type="journal article" date="2000" name="J. Bacteriol.">
        <title>Prephenate dehydratase from the aphid endosymbiont (Buchnera) displays changes in the regulatory domain that suggest its desensitization to inhibition by phenylalanine.</title>
        <authorList>
            <person name="Jimenez N."/>
            <person name="Gonzalez-Candelas F."/>
            <person name="Silva F.J."/>
        </authorList>
    </citation>
    <scope>NUCLEOTIDE SEQUENCE [GENOMIC DNA]</scope>
</reference>
<reference key="2">
    <citation type="journal article" date="2000" name="Nature">
        <title>Genome sequence of the endocellular bacterial symbiont of aphids Buchnera sp. APS.</title>
        <authorList>
            <person name="Shigenobu S."/>
            <person name="Watanabe H."/>
            <person name="Hattori M."/>
            <person name="Sakaki Y."/>
            <person name="Ishikawa H."/>
        </authorList>
    </citation>
    <scope>NUCLEOTIDE SEQUENCE [LARGE SCALE GENOMIC DNA]</scope>
    <source>
        <strain>APS</strain>
    </source>
</reference>
<accession>P57473</accession>
<accession>Q9L4J1</accession>
<organism>
    <name type="scientific">Buchnera aphidicola subsp. Acyrthosiphon pisum (strain APS)</name>
    <name type="common">Acyrthosiphon pisum symbiotic bacterium</name>
    <dbReference type="NCBI Taxonomy" id="107806"/>
    <lineage>
        <taxon>Bacteria</taxon>
        <taxon>Pseudomonadati</taxon>
        <taxon>Pseudomonadota</taxon>
        <taxon>Gammaproteobacteria</taxon>
        <taxon>Enterobacterales</taxon>
        <taxon>Erwiniaceae</taxon>
        <taxon>Buchnera</taxon>
    </lineage>
</organism>
<comment type="function">
    <text evidence="1">Involved in targeting and insertion of nascent membrane proteins into the cytoplasmic membrane. Binds to the hydrophobic signal sequence of the ribosome-nascent chain (RNC) as it emerges from the ribosomes. The SRP-RNC complex is then targeted to the cytoplasmic membrane where it interacts with the SRP receptor FtsY. Interaction with FtsY leads to the transfer of the RNC complex to the Sec translocase for insertion into the membrane, the hydrolysis of GTP by both Ffh and FtsY, and the dissociation of the SRP-FtsY complex into the individual components.</text>
</comment>
<comment type="catalytic activity">
    <reaction evidence="1">
        <text>GTP + H2O = GDP + phosphate + H(+)</text>
        <dbReference type="Rhea" id="RHEA:19669"/>
        <dbReference type="ChEBI" id="CHEBI:15377"/>
        <dbReference type="ChEBI" id="CHEBI:15378"/>
        <dbReference type="ChEBI" id="CHEBI:37565"/>
        <dbReference type="ChEBI" id="CHEBI:43474"/>
        <dbReference type="ChEBI" id="CHEBI:58189"/>
        <dbReference type="EC" id="3.6.5.4"/>
    </reaction>
</comment>
<comment type="subunit">
    <text evidence="1">Part of the signal recognition particle protein translocation system, which is composed of SRP and FtsY. SRP is a ribonucleoprotein composed of Ffh and a 4.5S RNA molecule.</text>
</comment>
<comment type="subcellular location">
    <subcellularLocation>
        <location evidence="1">Cytoplasm</location>
    </subcellularLocation>
    <text evidence="1">The SRP-RNC complex is targeted to the cytoplasmic membrane.</text>
</comment>
<comment type="domain">
    <text evidence="1">Composed of three domains: the N-terminal N domain, which is responsible for interactions with the ribosome, the central G domain, which binds GTP, and the C-terminal M domain, which binds the RNA and the signal sequence of the RNC.</text>
</comment>
<comment type="similarity">
    <text evidence="1">Belongs to the GTP-binding SRP family. SRP54 subfamily.</text>
</comment>
<dbReference type="EC" id="3.6.5.4" evidence="1"/>
<dbReference type="EMBL" id="AJ239043">
    <property type="protein sequence ID" value="CAB90997.1"/>
    <property type="molecule type" value="Genomic_DNA"/>
</dbReference>
<dbReference type="EMBL" id="BA000003">
    <property type="protein sequence ID" value="BAB13096.1"/>
    <property type="molecule type" value="Genomic_DNA"/>
</dbReference>
<dbReference type="RefSeq" id="NP_240210.1">
    <property type="nucleotide sequence ID" value="NC_002528.1"/>
</dbReference>
<dbReference type="RefSeq" id="WP_010896096.1">
    <property type="nucleotide sequence ID" value="NC_002528.1"/>
</dbReference>
<dbReference type="SMR" id="P57473"/>
<dbReference type="STRING" id="563178.BUAP5A_386"/>
<dbReference type="EnsemblBacteria" id="BAB13096">
    <property type="protein sequence ID" value="BAB13096"/>
    <property type="gene ID" value="BAB13096"/>
</dbReference>
<dbReference type="KEGG" id="buc:BU393"/>
<dbReference type="PATRIC" id="fig|107806.10.peg.407"/>
<dbReference type="eggNOG" id="COG0541">
    <property type="taxonomic scope" value="Bacteria"/>
</dbReference>
<dbReference type="HOGENOM" id="CLU_009301_6_0_6"/>
<dbReference type="Proteomes" id="UP000001806">
    <property type="component" value="Chromosome"/>
</dbReference>
<dbReference type="GO" id="GO:0048500">
    <property type="term" value="C:signal recognition particle"/>
    <property type="evidence" value="ECO:0007669"/>
    <property type="project" value="UniProtKB-UniRule"/>
</dbReference>
<dbReference type="GO" id="GO:0008312">
    <property type="term" value="F:7S RNA binding"/>
    <property type="evidence" value="ECO:0007669"/>
    <property type="project" value="InterPro"/>
</dbReference>
<dbReference type="GO" id="GO:0016887">
    <property type="term" value="F:ATP hydrolysis activity"/>
    <property type="evidence" value="ECO:0007669"/>
    <property type="project" value="InterPro"/>
</dbReference>
<dbReference type="GO" id="GO:0005525">
    <property type="term" value="F:GTP binding"/>
    <property type="evidence" value="ECO:0007669"/>
    <property type="project" value="UniProtKB-UniRule"/>
</dbReference>
<dbReference type="GO" id="GO:0003924">
    <property type="term" value="F:GTPase activity"/>
    <property type="evidence" value="ECO:0007669"/>
    <property type="project" value="UniProtKB-UniRule"/>
</dbReference>
<dbReference type="GO" id="GO:0006614">
    <property type="term" value="P:SRP-dependent cotranslational protein targeting to membrane"/>
    <property type="evidence" value="ECO:0007669"/>
    <property type="project" value="InterPro"/>
</dbReference>
<dbReference type="CDD" id="cd18539">
    <property type="entry name" value="SRP_G"/>
    <property type="match status" value="1"/>
</dbReference>
<dbReference type="Gene3D" id="3.40.50.300">
    <property type="entry name" value="P-loop containing nucleotide triphosphate hydrolases"/>
    <property type="match status" value="1"/>
</dbReference>
<dbReference type="Gene3D" id="1.20.120.140">
    <property type="entry name" value="Signal recognition particle SRP54, nucleotide-binding domain"/>
    <property type="match status" value="1"/>
</dbReference>
<dbReference type="Gene3D" id="1.10.260.30">
    <property type="entry name" value="Signal recognition particle, SRP54 subunit, M-domain"/>
    <property type="match status" value="1"/>
</dbReference>
<dbReference type="HAMAP" id="MF_00306">
    <property type="entry name" value="SRP54"/>
    <property type="match status" value="1"/>
</dbReference>
<dbReference type="InterPro" id="IPR003593">
    <property type="entry name" value="AAA+_ATPase"/>
</dbReference>
<dbReference type="InterPro" id="IPR027417">
    <property type="entry name" value="P-loop_NTPase"/>
</dbReference>
<dbReference type="InterPro" id="IPR036891">
    <property type="entry name" value="Signal_recog_part_SRP54_M_sf"/>
</dbReference>
<dbReference type="InterPro" id="IPR013822">
    <property type="entry name" value="Signal_recog_particl_SRP54_hlx"/>
</dbReference>
<dbReference type="InterPro" id="IPR004125">
    <property type="entry name" value="Signal_recog_particle_SRP54_M"/>
</dbReference>
<dbReference type="InterPro" id="IPR004780">
    <property type="entry name" value="SRP"/>
</dbReference>
<dbReference type="InterPro" id="IPR022941">
    <property type="entry name" value="SRP54"/>
</dbReference>
<dbReference type="InterPro" id="IPR000897">
    <property type="entry name" value="SRP54_GTPase_dom"/>
</dbReference>
<dbReference type="InterPro" id="IPR042101">
    <property type="entry name" value="SRP54_N_sf"/>
</dbReference>
<dbReference type="NCBIfam" id="TIGR00959">
    <property type="entry name" value="ffh"/>
    <property type="match status" value="1"/>
</dbReference>
<dbReference type="PANTHER" id="PTHR11564">
    <property type="entry name" value="SIGNAL RECOGNITION PARTICLE 54K PROTEIN SRP54"/>
    <property type="match status" value="1"/>
</dbReference>
<dbReference type="PANTHER" id="PTHR11564:SF5">
    <property type="entry name" value="SIGNAL RECOGNITION PARTICLE SUBUNIT SRP54"/>
    <property type="match status" value="1"/>
</dbReference>
<dbReference type="Pfam" id="PF00448">
    <property type="entry name" value="SRP54"/>
    <property type="match status" value="1"/>
</dbReference>
<dbReference type="Pfam" id="PF02881">
    <property type="entry name" value="SRP54_N"/>
    <property type="match status" value="1"/>
</dbReference>
<dbReference type="Pfam" id="PF02978">
    <property type="entry name" value="SRP_SPB"/>
    <property type="match status" value="1"/>
</dbReference>
<dbReference type="SMART" id="SM00382">
    <property type="entry name" value="AAA"/>
    <property type="match status" value="1"/>
</dbReference>
<dbReference type="SMART" id="SM00962">
    <property type="entry name" value="SRP54"/>
    <property type="match status" value="1"/>
</dbReference>
<dbReference type="SMART" id="SM00963">
    <property type="entry name" value="SRP54_N"/>
    <property type="match status" value="1"/>
</dbReference>
<dbReference type="SUPFAM" id="SSF52540">
    <property type="entry name" value="P-loop containing nucleoside triphosphate hydrolases"/>
    <property type="match status" value="1"/>
</dbReference>
<dbReference type="SUPFAM" id="SSF47446">
    <property type="entry name" value="Signal peptide-binding domain"/>
    <property type="match status" value="1"/>
</dbReference>
<dbReference type="PROSITE" id="PS00300">
    <property type="entry name" value="SRP54"/>
    <property type="match status" value="1"/>
</dbReference>
<feature type="chain" id="PRO_0000101150" description="Signal recognition particle protein">
    <location>
        <begin position="1"/>
        <end position="451"/>
    </location>
</feature>
<feature type="binding site" evidence="1">
    <location>
        <begin position="107"/>
        <end position="114"/>
    </location>
    <ligand>
        <name>GTP</name>
        <dbReference type="ChEBI" id="CHEBI:37565"/>
    </ligand>
</feature>
<feature type="binding site" evidence="1">
    <location>
        <begin position="190"/>
        <end position="194"/>
    </location>
    <ligand>
        <name>GTP</name>
        <dbReference type="ChEBI" id="CHEBI:37565"/>
    </ligand>
</feature>
<feature type="binding site" evidence="1">
    <location>
        <begin position="248"/>
        <end position="251"/>
    </location>
    <ligand>
        <name>GTP</name>
        <dbReference type="ChEBI" id="CHEBI:37565"/>
    </ligand>
</feature>
<feature type="sequence conflict" description="In Ref. 1; CAB90997." evidence="2" ref="1">
    <original>L</original>
    <variation>I</variation>
    <location>
        <position position="17"/>
    </location>
</feature>
<feature type="sequence conflict" description="In Ref. 1; CAB90997." evidence="2" ref="1">
    <original>H</original>
    <variation>N</variation>
    <location>
        <position position="166"/>
    </location>
</feature>
<feature type="sequence conflict" description="In Ref. 1; CAB90997." evidence="2" ref="1">
    <original>I</original>
    <variation>T</variation>
    <location>
        <position position="364"/>
    </location>
</feature>
<feature type="sequence conflict" description="In Ref. 1; CAB90997." evidence="2" ref="1">
    <original>I</original>
    <variation>L</variation>
    <location>
        <position position="393"/>
    </location>
</feature>
<protein>
    <recommendedName>
        <fullName evidence="1">Signal recognition particle protein</fullName>
        <ecNumber evidence="1">3.6.5.4</ecNumber>
    </recommendedName>
    <alternativeName>
        <fullName evidence="1">Fifty-four homolog</fullName>
    </alternativeName>
</protein>
<gene>
    <name evidence="1" type="primary">ffh</name>
    <name type="ordered locus">BU393</name>
</gene>